<sequence>MHQRLATLAAARLYLCTDARRERGDLAEFADAALAGGVDVIQLRDKGSPGEQRFGPLEARDELAACEILADAARRHGALFAVNDRADIARAAGADVLHLGQGDLPLDVARAFVGPDVLLGLSSHDRDQMTAAAAGPADYFCVGPCWPTPTKPGRAAPGLALVRAAAELRTGKPWFAIGGIDAQRLPEVLDAGARRVVVVRAITAADDPAAAARRLSSALAAAR</sequence>
<comment type="function">
    <text evidence="1">Condenses 4-methyl-5-(beta-hydroxyethyl)thiazole monophosphate (THZ-P) and 2-methyl-4-amino-5-hydroxymethyl pyrimidine pyrophosphate (HMP-PP) to form thiamine monophosphate (TMP).</text>
</comment>
<comment type="catalytic activity">
    <reaction evidence="1">
        <text>2-[(2R,5Z)-2-carboxy-4-methylthiazol-5(2H)-ylidene]ethyl phosphate + 4-amino-2-methyl-5-(diphosphooxymethyl)pyrimidine + 2 H(+) = thiamine phosphate + CO2 + diphosphate</text>
        <dbReference type="Rhea" id="RHEA:47844"/>
        <dbReference type="ChEBI" id="CHEBI:15378"/>
        <dbReference type="ChEBI" id="CHEBI:16526"/>
        <dbReference type="ChEBI" id="CHEBI:33019"/>
        <dbReference type="ChEBI" id="CHEBI:37575"/>
        <dbReference type="ChEBI" id="CHEBI:57841"/>
        <dbReference type="ChEBI" id="CHEBI:62899"/>
        <dbReference type="EC" id="2.5.1.3"/>
    </reaction>
</comment>
<comment type="catalytic activity">
    <reaction evidence="1">
        <text>2-(2-carboxy-4-methylthiazol-5-yl)ethyl phosphate + 4-amino-2-methyl-5-(diphosphooxymethyl)pyrimidine + 2 H(+) = thiamine phosphate + CO2 + diphosphate</text>
        <dbReference type="Rhea" id="RHEA:47848"/>
        <dbReference type="ChEBI" id="CHEBI:15378"/>
        <dbReference type="ChEBI" id="CHEBI:16526"/>
        <dbReference type="ChEBI" id="CHEBI:33019"/>
        <dbReference type="ChEBI" id="CHEBI:37575"/>
        <dbReference type="ChEBI" id="CHEBI:57841"/>
        <dbReference type="ChEBI" id="CHEBI:62890"/>
        <dbReference type="EC" id="2.5.1.3"/>
    </reaction>
</comment>
<comment type="catalytic activity">
    <reaction evidence="1">
        <text>4-methyl-5-(2-phosphooxyethyl)-thiazole + 4-amino-2-methyl-5-(diphosphooxymethyl)pyrimidine + H(+) = thiamine phosphate + diphosphate</text>
        <dbReference type="Rhea" id="RHEA:22328"/>
        <dbReference type="ChEBI" id="CHEBI:15378"/>
        <dbReference type="ChEBI" id="CHEBI:33019"/>
        <dbReference type="ChEBI" id="CHEBI:37575"/>
        <dbReference type="ChEBI" id="CHEBI:57841"/>
        <dbReference type="ChEBI" id="CHEBI:58296"/>
        <dbReference type="EC" id="2.5.1.3"/>
    </reaction>
</comment>
<comment type="cofactor">
    <cofactor evidence="1">
        <name>Mg(2+)</name>
        <dbReference type="ChEBI" id="CHEBI:18420"/>
    </cofactor>
    <text evidence="1">Binds 1 Mg(2+) ion per subunit.</text>
</comment>
<comment type="pathway">
    <text evidence="1">Cofactor biosynthesis; thiamine diphosphate biosynthesis; thiamine phosphate from 4-amino-2-methyl-5-diphosphomethylpyrimidine and 4-methyl-5-(2-phosphoethyl)-thiazole: step 1/1.</text>
</comment>
<comment type="similarity">
    <text evidence="1">Belongs to the thiamine-phosphate synthase family.</text>
</comment>
<gene>
    <name evidence="1" type="primary">thiE</name>
    <name type="ordered locus">MAV_4748</name>
</gene>
<protein>
    <recommendedName>
        <fullName evidence="1">Thiamine-phosphate synthase</fullName>
        <shortName evidence="1">TP synthase</shortName>
        <shortName evidence="1">TPS</shortName>
        <ecNumber evidence="1">2.5.1.3</ecNumber>
    </recommendedName>
    <alternativeName>
        <fullName evidence="1">Thiamine-phosphate pyrophosphorylase</fullName>
        <shortName evidence="1">TMP pyrophosphorylase</shortName>
        <shortName evidence="1">TMP-PPase</shortName>
    </alternativeName>
</protein>
<dbReference type="EC" id="2.5.1.3" evidence="1"/>
<dbReference type="EMBL" id="CP000479">
    <property type="protein sequence ID" value="ABK67563.1"/>
    <property type="molecule type" value="Genomic_DNA"/>
</dbReference>
<dbReference type="RefSeq" id="WP_011726221.1">
    <property type="nucleotide sequence ID" value="NC_008595.1"/>
</dbReference>
<dbReference type="SMR" id="A0QLT6"/>
<dbReference type="GeneID" id="75272271"/>
<dbReference type="KEGG" id="mav:MAV_4748"/>
<dbReference type="HOGENOM" id="CLU_018272_3_0_11"/>
<dbReference type="UniPathway" id="UPA00060">
    <property type="reaction ID" value="UER00141"/>
</dbReference>
<dbReference type="Proteomes" id="UP000001574">
    <property type="component" value="Chromosome"/>
</dbReference>
<dbReference type="GO" id="GO:0005737">
    <property type="term" value="C:cytoplasm"/>
    <property type="evidence" value="ECO:0007669"/>
    <property type="project" value="TreeGrafter"/>
</dbReference>
<dbReference type="GO" id="GO:0000287">
    <property type="term" value="F:magnesium ion binding"/>
    <property type="evidence" value="ECO:0007669"/>
    <property type="project" value="UniProtKB-UniRule"/>
</dbReference>
<dbReference type="GO" id="GO:0004789">
    <property type="term" value="F:thiamine-phosphate diphosphorylase activity"/>
    <property type="evidence" value="ECO:0007669"/>
    <property type="project" value="UniProtKB-UniRule"/>
</dbReference>
<dbReference type="GO" id="GO:0009228">
    <property type="term" value="P:thiamine biosynthetic process"/>
    <property type="evidence" value="ECO:0007669"/>
    <property type="project" value="UniProtKB-KW"/>
</dbReference>
<dbReference type="GO" id="GO:0009229">
    <property type="term" value="P:thiamine diphosphate biosynthetic process"/>
    <property type="evidence" value="ECO:0007669"/>
    <property type="project" value="UniProtKB-UniRule"/>
</dbReference>
<dbReference type="CDD" id="cd00564">
    <property type="entry name" value="TMP_TenI"/>
    <property type="match status" value="1"/>
</dbReference>
<dbReference type="FunFam" id="3.20.20.70:FF:000178">
    <property type="entry name" value="Thiamine-phosphate synthase"/>
    <property type="match status" value="1"/>
</dbReference>
<dbReference type="Gene3D" id="3.20.20.70">
    <property type="entry name" value="Aldolase class I"/>
    <property type="match status" value="1"/>
</dbReference>
<dbReference type="HAMAP" id="MF_00097">
    <property type="entry name" value="TMP_synthase"/>
    <property type="match status" value="1"/>
</dbReference>
<dbReference type="InterPro" id="IPR013785">
    <property type="entry name" value="Aldolase_TIM"/>
</dbReference>
<dbReference type="InterPro" id="IPR036206">
    <property type="entry name" value="ThiamineP_synth_sf"/>
</dbReference>
<dbReference type="InterPro" id="IPR022998">
    <property type="entry name" value="ThiamineP_synth_TenI"/>
</dbReference>
<dbReference type="InterPro" id="IPR034291">
    <property type="entry name" value="TMP_synthase"/>
</dbReference>
<dbReference type="NCBIfam" id="TIGR00693">
    <property type="entry name" value="thiE"/>
    <property type="match status" value="1"/>
</dbReference>
<dbReference type="PANTHER" id="PTHR20857">
    <property type="entry name" value="THIAMINE-PHOSPHATE PYROPHOSPHORYLASE"/>
    <property type="match status" value="1"/>
</dbReference>
<dbReference type="PANTHER" id="PTHR20857:SF15">
    <property type="entry name" value="THIAMINE-PHOSPHATE SYNTHASE"/>
    <property type="match status" value="1"/>
</dbReference>
<dbReference type="Pfam" id="PF02581">
    <property type="entry name" value="TMP-TENI"/>
    <property type="match status" value="1"/>
</dbReference>
<dbReference type="SUPFAM" id="SSF51391">
    <property type="entry name" value="Thiamin phosphate synthase"/>
    <property type="match status" value="1"/>
</dbReference>
<feature type="chain" id="PRO_1000008154" description="Thiamine-phosphate synthase">
    <location>
        <begin position="1"/>
        <end position="223"/>
    </location>
</feature>
<feature type="binding site" evidence="1">
    <location>
        <begin position="42"/>
        <end position="46"/>
    </location>
    <ligand>
        <name>4-amino-2-methyl-5-(diphosphooxymethyl)pyrimidine</name>
        <dbReference type="ChEBI" id="CHEBI:57841"/>
    </ligand>
</feature>
<feature type="binding site" evidence="1">
    <location>
        <position position="83"/>
    </location>
    <ligand>
        <name>4-amino-2-methyl-5-(diphosphooxymethyl)pyrimidine</name>
        <dbReference type="ChEBI" id="CHEBI:57841"/>
    </ligand>
</feature>
<feature type="binding site" evidence="1">
    <location>
        <position position="84"/>
    </location>
    <ligand>
        <name>Mg(2+)</name>
        <dbReference type="ChEBI" id="CHEBI:18420"/>
    </ligand>
</feature>
<feature type="binding site" evidence="1">
    <location>
        <position position="103"/>
    </location>
    <ligand>
        <name>Mg(2+)</name>
        <dbReference type="ChEBI" id="CHEBI:18420"/>
    </ligand>
</feature>
<feature type="binding site" evidence="1">
    <location>
        <position position="122"/>
    </location>
    <ligand>
        <name>4-amino-2-methyl-5-(diphosphooxymethyl)pyrimidine</name>
        <dbReference type="ChEBI" id="CHEBI:57841"/>
    </ligand>
</feature>
<feature type="binding site" evidence="1">
    <location>
        <begin position="148"/>
        <end position="150"/>
    </location>
    <ligand>
        <name>2-[(2R,5Z)-2-carboxy-4-methylthiazol-5(2H)-ylidene]ethyl phosphate</name>
        <dbReference type="ChEBI" id="CHEBI:62899"/>
    </ligand>
</feature>
<feature type="binding site" evidence="1">
    <location>
        <position position="151"/>
    </location>
    <ligand>
        <name>4-amino-2-methyl-5-(diphosphooxymethyl)pyrimidine</name>
        <dbReference type="ChEBI" id="CHEBI:57841"/>
    </ligand>
</feature>
<feature type="binding site" evidence="1">
    <location>
        <position position="179"/>
    </location>
    <ligand>
        <name>2-[(2R,5Z)-2-carboxy-4-methylthiazol-5(2H)-ylidene]ethyl phosphate</name>
        <dbReference type="ChEBI" id="CHEBI:62899"/>
    </ligand>
</feature>
<name>THIE_MYCA1</name>
<accession>A0QLT6</accession>
<organism>
    <name type="scientific">Mycobacterium avium (strain 104)</name>
    <dbReference type="NCBI Taxonomy" id="243243"/>
    <lineage>
        <taxon>Bacteria</taxon>
        <taxon>Bacillati</taxon>
        <taxon>Actinomycetota</taxon>
        <taxon>Actinomycetes</taxon>
        <taxon>Mycobacteriales</taxon>
        <taxon>Mycobacteriaceae</taxon>
        <taxon>Mycobacterium</taxon>
        <taxon>Mycobacterium avium complex (MAC)</taxon>
    </lineage>
</organism>
<reference key="1">
    <citation type="submission" date="2006-10" db="EMBL/GenBank/DDBJ databases">
        <authorList>
            <person name="Fleischmann R.D."/>
            <person name="Dodson R.J."/>
            <person name="Haft D.H."/>
            <person name="Merkel J.S."/>
            <person name="Nelson W.C."/>
            <person name="Fraser C.M."/>
        </authorList>
    </citation>
    <scope>NUCLEOTIDE SEQUENCE [LARGE SCALE GENOMIC DNA]</scope>
    <source>
        <strain>104</strain>
    </source>
</reference>
<proteinExistence type="inferred from homology"/>
<keyword id="KW-0460">Magnesium</keyword>
<keyword id="KW-0479">Metal-binding</keyword>
<keyword id="KW-0784">Thiamine biosynthesis</keyword>
<keyword id="KW-0808">Transferase</keyword>
<evidence type="ECO:0000255" key="1">
    <source>
        <dbReference type="HAMAP-Rule" id="MF_00097"/>
    </source>
</evidence>